<accession>Q979E4</accession>
<comment type="function">
    <text evidence="1">Methyltransferase involved in ribosomal biogenesis. Specifically catalyzes the N1-methylation of the pseudouridine corresponding to position 914 in M.jannaschii 16S rRNA.</text>
</comment>
<comment type="catalytic activity">
    <reaction evidence="1">
        <text>a pseudouridine in rRNA + S-adenosyl-L-methionine = an N(1)-methylpseudouridine in rRNA + S-adenosyl-L-homocysteine + H(+)</text>
        <dbReference type="Rhea" id="RHEA:46696"/>
        <dbReference type="Rhea" id="RHEA-COMP:11634"/>
        <dbReference type="Rhea" id="RHEA-COMP:13933"/>
        <dbReference type="ChEBI" id="CHEBI:15378"/>
        <dbReference type="ChEBI" id="CHEBI:57856"/>
        <dbReference type="ChEBI" id="CHEBI:59789"/>
        <dbReference type="ChEBI" id="CHEBI:65314"/>
        <dbReference type="ChEBI" id="CHEBI:74890"/>
    </reaction>
</comment>
<comment type="subunit">
    <text evidence="1">Homodimer.</text>
</comment>
<comment type="similarity">
    <text evidence="2">Belongs to the class IV-like SAM-binding methyltransferase superfamily. RNA methyltransferase NEP1 family.</text>
</comment>
<feature type="chain" id="PRO_0000158625" description="Ribosomal RNA small subunit methyltransferase Nep1">
    <location>
        <begin position="1"/>
        <end position="222"/>
    </location>
</feature>
<feature type="binding site" evidence="1">
    <location>
        <position position="177"/>
    </location>
    <ligand>
        <name>S-adenosyl-L-methionine</name>
        <dbReference type="ChEBI" id="CHEBI:59789"/>
    </ligand>
</feature>
<feature type="binding site" evidence="1">
    <location>
        <position position="182"/>
    </location>
    <ligand>
        <name>S-adenosyl-L-methionine</name>
        <dbReference type="ChEBI" id="CHEBI:59789"/>
    </ligand>
</feature>
<feature type="binding site" evidence="1">
    <location>
        <begin position="197"/>
        <end position="202"/>
    </location>
    <ligand>
        <name>S-adenosyl-L-methionine</name>
        <dbReference type="ChEBI" id="CHEBI:59789"/>
    </ligand>
</feature>
<feature type="site" description="Interaction with substrate rRNA" evidence="1">
    <location>
        <position position="62"/>
    </location>
</feature>
<feature type="site" description="Stabilizes Arg-62" evidence="1">
    <location>
        <position position="64"/>
    </location>
</feature>
<feature type="site" description="Interaction with substrate rRNA" evidence="1">
    <location>
        <position position="103"/>
    </location>
</feature>
<feature type="site" description="Interaction with substrate rRNA" evidence="1">
    <location>
        <position position="106"/>
    </location>
</feature>
<feature type="site" description="Interaction with substrate rRNA" evidence="1">
    <location>
        <position position="110"/>
    </location>
</feature>
<protein>
    <recommendedName>
        <fullName evidence="1">Ribosomal RNA small subunit methyltransferase Nep1</fullName>
        <ecNumber evidence="1">2.1.1.-</ecNumber>
    </recommendedName>
    <alternativeName>
        <fullName evidence="1">16S rRNA (pseudouridine-N1-)-methyltransferase Nep1</fullName>
    </alternativeName>
</protein>
<evidence type="ECO:0000255" key="1">
    <source>
        <dbReference type="HAMAP-Rule" id="MF_00554"/>
    </source>
</evidence>
<evidence type="ECO:0000305" key="2"/>
<organism>
    <name type="scientific">Thermoplasma volcanium (strain ATCC 51530 / DSM 4299 / JCM 9571 / NBRC 15438 / GSS1)</name>
    <dbReference type="NCBI Taxonomy" id="273116"/>
    <lineage>
        <taxon>Archaea</taxon>
        <taxon>Methanobacteriati</taxon>
        <taxon>Thermoplasmatota</taxon>
        <taxon>Thermoplasmata</taxon>
        <taxon>Thermoplasmatales</taxon>
        <taxon>Thermoplasmataceae</taxon>
        <taxon>Thermoplasma</taxon>
    </lineage>
</organism>
<reference key="1">
    <citation type="journal article" date="2000" name="Proc. Natl. Acad. Sci. U.S.A.">
        <title>Archaeal adaptation to higher temperatures revealed by genomic sequence of Thermoplasma volcanium.</title>
        <authorList>
            <person name="Kawashima T."/>
            <person name="Amano N."/>
            <person name="Koike H."/>
            <person name="Makino S."/>
            <person name="Higuchi S."/>
            <person name="Kawashima-Ohya Y."/>
            <person name="Watanabe K."/>
            <person name="Yamazaki M."/>
            <person name="Kanehori K."/>
            <person name="Kawamoto T."/>
            <person name="Nunoshiba T."/>
            <person name="Yamamoto Y."/>
            <person name="Aramaki H."/>
            <person name="Makino K."/>
            <person name="Suzuki M."/>
        </authorList>
    </citation>
    <scope>NUCLEOTIDE SEQUENCE [LARGE SCALE GENOMIC DNA]</scope>
    <source>
        <strain>ATCC 51530 / DSM 4299 / JCM 9571 / NBRC 15438 / GSS1</strain>
    </source>
</reference>
<keyword id="KW-0489">Methyltransferase</keyword>
<keyword id="KW-0690">Ribosome biogenesis</keyword>
<keyword id="KW-0694">RNA-binding</keyword>
<keyword id="KW-0698">rRNA processing</keyword>
<keyword id="KW-0699">rRNA-binding</keyword>
<keyword id="KW-0949">S-adenosyl-L-methionine</keyword>
<keyword id="KW-0808">Transferase</keyword>
<proteinExistence type="inferred from homology"/>
<sequence>MLHLIVADSELETIPEEMLDDPGVRRFAKKRNKRVDRMILDSNYMHAFIDKYYPGESKRRGRPDIIYILLEMAQESILNRKNLLRTYIHTRNDFVIKISPITRMPKSYNRFIGLFEDLFEKEIITNNGKTLLSLERMKLDELLESLKKDRTILLHPKGEFKKPSEFISTEDIAAIIGGFSEGDFRSDVSNIPEKYSIFRDELTIWSVGLEIVASYERAIGLL</sequence>
<name>NEP1_THEVO</name>
<gene>
    <name type="primary">nep1</name>
    <name type="ordered locus">TV1217</name>
    <name type="ORF">TVG1248551</name>
</gene>
<dbReference type="EC" id="2.1.1.-" evidence="1"/>
<dbReference type="EMBL" id="BA000011">
    <property type="protein sequence ID" value="BAB60359.1"/>
    <property type="molecule type" value="Genomic_DNA"/>
</dbReference>
<dbReference type="RefSeq" id="WP_010917449.1">
    <property type="nucleotide sequence ID" value="NC_002689.2"/>
</dbReference>
<dbReference type="SMR" id="Q979E4"/>
<dbReference type="STRING" id="273116.gene:9382021"/>
<dbReference type="PaxDb" id="273116-14325455"/>
<dbReference type="GeneID" id="1441331"/>
<dbReference type="KEGG" id="tvo:TVG1248551"/>
<dbReference type="eggNOG" id="arCOG04122">
    <property type="taxonomic scope" value="Archaea"/>
</dbReference>
<dbReference type="HOGENOM" id="CLU_055846_1_3_2"/>
<dbReference type="OrthoDB" id="7612at2157"/>
<dbReference type="PhylomeDB" id="Q979E4"/>
<dbReference type="Proteomes" id="UP000001017">
    <property type="component" value="Chromosome"/>
</dbReference>
<dbReference type="GO" id="GO:0070037">
    <property type="term" value="F:rRNA (pseudouridine) methyltransferase activity"/>
    <property type="evidence" value="ECO:0007669"/>
    <property type="project" value="UniProtKB-UniRule"/>
</dbReference>
<dbReference type="GO" id="GO:0019843">
    <property type="term" value="F:rRNA binding"/>
    <property type="evidence" value="ECO:0007669"/>
    <property type="project" value="UniProtKB-UniRule"/>
</dbReference>
<dbReference type="GO" id="GO:0070475">
    <property type="term" value="P:rRNA base methylation"/>
    <property type="evidence" value="ECO:0007669"/>
    <property type="project" value="InterPro"/>
</dbReference>
<dbReference type="CDD" id="cd18088">
    <property type="entry name" value="Nep1-like"/>
    <property type="match status" value="1"/>
</dbReference>
<dbReference type="Gene3D" id="3.40.1280.10">
    <property type="match status" value="1"/>
</dbReference>
<dbReference type="HAMAP" id="MF_00554">
    <property type="entry name" value="NEP1"/>
    <property type="match status" value="1"/>
</dbReference>
<dbReference type="InterPro" id="IPR029028">
    <property type="entry name" value="Alpha/beta_knot_MTases"/>
</dbReference>
<dbReference type="InterPro" id="IPR005304">
    <property type="entry name" value="Rbsml_bgen_MeTrfase_EMG1/NEP1"/>
</dbReference>
<dbReference type="InterPro" id="IPR023503">
    <property type="entry name" value="Ribosome_NEP1_arc"/>
</dbReference>
<dbReference type="InterPro" id="IPR029026">
    <property type="entry name" value="tRNA_m1G_MTases_N"/>
</dbReference>
<dbReference type="NCBIfam" id="NF003204">
    <property type="entry name" value="PRK04171.1-3"/>
    <property type="match status" value="1"/>
</dbReference>
<dbReference type="PANTHER" id="PTHR12636">
    <property type="entry name" value="NEP1/MRA1"/>
    <property type="match status" value="1"/>
</dbReference>
<dbReference type="PANTHER" id="PTHR12636:SF5">
    <property type="entry name" value="RIBOSOMAL RNA SMALL SUBUNIT METHYLTRANSFERASE NEP1"/>
    <property type="match status" value="1"/>
</dbReference>
<dbReference type="Pfam" id="PF03587">
    <property type="entry name" value="EMG1"/>
    <property type="match status" value="1"/>
</dbReference>
<dbReference type="SUPFAM" id="SSF75217">
    <property type="entry name" value="alpha/beta knot"/>
    <property type="match status" value="1"/>
</dbReference>